<reference key="1">
    <citation type="journal article" date="2003" name="Nature">
        <title>Genome sequence of Bacillus cereus and comparative analysis with Bacillus anthracis.</title>
        <authorList>
            <person name="Ivanova N."/>
            <person name="Sorokin A."/>
            <person name="Anderson I."/>
            <person name="Galleron N."/>
            <person name="Candelon B."/>
            <person name="Kapatral V."/>
            <person name="Bhattacharyya A."/>
            <person name="Reznik G."/>
            <person name="Mikhailova N."/>
            <person name="Lapidus A."/>
            <person name="Chu L."/>
            <person name="Mazur M."/>
            <person name="Goltsman E."/>
            <person name="Larsen N."/>
            <person name="D'Souza M."/>
            <person name="Walunas T."/>
            <person name="Grechkin Y."/>
            <person name="Pusch G."/>
            <person name="Haselkorn R."/>
            <person name="Fonstein M."/>
            <person name="Ehrlich S.D."/>
            <person name="Overbeek R."/>
            <person name="Kyrpides N.C."/>
        </authorList>
    </citation>
    <scope>NUCLEOTIDE SEQUENCE [LARGE SCALE GENOMIC DNA]</scope>
    <source>
        <strain>ATCC 14579 / DSM 31 / CCUG 7414 / JCM 2152 / NBRC 15305 / NCIMB 9373 / NCTC 2599 / NRRL B-3711</strain>
    </source>
</reference>
<protein>
    <recommendedName>
        <fullName evidence="1">Uracil phosphoribosyltransferase</fullName>
        <ecNumber evidence="1">2.4.2.9</ecNumber>
    </recommendedName>
    <alternativeName>
        <fullName evidence="1">UMP pyrophosphorylase</fullName>
    </alternativeName>
    <alternativeName>
        <fullName evidence="1">UPRTase</fullName>
    </alternativeName>
</protein>
<keyword id="KW-0021">Allosteric enzyme</keyword>
<keyword id="KW-0328">Glycosyltransferase</keyword>
<keyword id="KW-0342">GTP-binding</keyword>
<keyword id="KW-0460">Magnesium</keyword>
<keyword id="KW-0547">Nucleotide-binding</keyword>
<keyword id="KW-1185">Reference proteome</keyword>
<keyword id="KW-0808">Transferase</keyword>
<dbReference type="EC" id="2.4.2.9" evidence="1"/>
<dbReference type="EMBL" id="AE016877">
    <property type="protein sequence ID" value="AAP12178.1"/>
    <property type="molecule type" value="Genomic_DNA"/>
</dbReference>
<dbReference type="RefSeq" id="NP_834977.1">
    <property type="nucleotide sequence ID" value="NC_004722.1"/>
</dbReference>
<dbReference type="RefSeq" id="WP_000517539.1">
    <property type="nucleotide sequence ID" value="NZ_CP138336.1"/>
</dbReference>
<dbReference type="SMR" id="Q814V3"/>
<dbReference type="STRING" id="226900.BC_5315"/>
<dbReference type="MetOSite" id="Q814V3"/>
<dbReference type="GeneID" id="93005808"/>
<dbReference type="KEGG" id="bce:BC5315"/>
<dbReference type="PATRIC" id="fig|226900.8.peg.5488"/>
<dbReference type="HOGENOM" id="CLU_067096_2_2_9"/>
<dbReference type="OrthoDB" id="9781675at2"/>
<dbReference type="UniPathway" id="UPA00574">
    <property type="reaction ID" value="UER00636"/>
</dbReference>
<dbReference type="Proteomes" id="UP000001417">
    <property type="component" value="Chromosome"/>
</dbReference>
<dbReference type="GO" id="GO:0005737">
    <property type="term" value="C:cytoplasm"/>
    <property type="evidence" value="ECO:0000318"/>
    <property type="project" value="GO_Central"/>
</dbReference>
<dbReference type="GO" id="GO:0005525">
    <property type="term" value="F:GTP binding"/>
    <property type="evidence" value="ECO:0007669"/>
    <property type="project" value="UniProtKB-KW"/>
</dbReference>
<dbReference type="GO" id="GO:0000287">
    <property type="term" value="F:magnesium ion binding"/>
    <property type="evidence" value="ECO:0007669"/>
    <property type="project" value="UniProtKB-UniRule"/>
</dbReference>
<dbReference type="GO" id="GO:0004845">
    <property type="term" value="F:uracil phosphoribosyltransferase activity"/>
    <property type="evidence" value="ECO:0000318"/>
    <property type="project" value="GO_Central"/>
</dbReference>
<dbReference type="GO" id="GO:0044206">
    <property type="term" value="P:UMP salvage"/>
    <property type="evidence" value="ECO:0007669"/>
    <property type="project" value="UniProtKB-UniRule"/>
</dbReference>
<dbReference type="GO" id="GO:0006223">
    <property type="term" value="P:uracil salvage"/>
    <property type="evidence" value="ECO:0007669"/>
    <property type="project" value="InterPro"/>
</dbReference>
<dbReference type="CDD" id="cd06223">
    <property type="entry name" value="PRTases_typeI"/>
    <property type="match status" value="1"/>
</dbReference>
<dbReference type="FunFam" id="3.40.50.2020:FF:000003">
    <property type="entry name" value="Uracil phosphoribosyltransferase"/>
    <property type="match status" value="1"/>
</dbReference>
<dbReference type="Gene3D" id="3.40.50.2020">
    <property type="match status" value="1"/>
</dbReference>
<dbReference type="HAMAP" id="MF_01218_B">
    <property type="entry name" value="Upp_B"/>
    <property type="match status" value="1"/>
</dbReference>
<dbReference type="InterPro" id="IPR000836">
    <property type="entry name" value="PRibTrfase_dom"/>
</dbReference>
<dbReference type="InterPro" id="IPR029057">
    <property type="entry name" value="PRTase-like"/>
</dbReference>
<dbReference type="InterPro" id="IPR034332">
    <property type="entry name" value="Upp_B"/>
</dbReference>
<dbReference type="InterPro" id="IPR050054">
    <property type="entry name" value="UPRTase/APRTase"/>
</dbReference>
<dbReference type="InterPro" id="IPR005765">
    <property type="entry name" value="Ura_phspho_trans"/>
</dbReference>
<dbReference type="NCBIfam" id="NF001097">
    <property type="entry name" value="PRK00129.1"/>
    <property type="match status" value="1"/>
</dbReference>
<dbReference type="NCBIfam" id="TIGR01091">
    <property type="entry name" value="upp"/>
    <property type="match status" value="1"/>
</dbReference>
<dbReference type="PANTHER" id="PTHR32315">
    <property type="entry name" value="ADENINE PHOSPHORIBOSYLTRANSFERASE"/>
    <property type="match status" value="1"/>
</dbReference>
<dbReference type="PANTHER" id="PTHR32315:SF4">
    <property type="entry name" value="URACIL PHOSPHORIBOSYLTRANSFERASE, CHLOROPLASTIC"/>
    <property type="match status" value="1"/>
</dbReference>
<dbReference type="Pfam" id="PF14681">
    <property type="entry name" value="UPRTase"/>
    <property type="match status" value="1"/>
</dbReference>
<dbReference type="SUPFAM" id="SSF53271">
    <property type="entry name" value="PRTase-like"/>
    <property type="match status" value="1"/>
</dbReference>
<proteinExistence type="inferred from homology"/>
<accession>Q814V3</accession>
<comment type="function">
    <text evidence="1">Catalyzes the conversion of uracil and 5-phospho-alpha-D-ribose 1-diphosphate (PRPP) to UMP and diphosphate.</text>
</comment>
<comment type="catalytic activity">
    <reaction evidence="1">
        <text>UMP + diphosphate = 5-phospho-alpha-D-ribose 1-diphosphate + uracil</text>
        <dbReference type="Rhea" id="RHEA:13017"/>
        <dbReference type="ChEBI" id="CHEBI:17568"/>
        <dbReference type="ChEBI" id="CHEBI:33019"/>
        <dbReference type="ChEBI" id="CHEBI:57865"/>
        <dbReference type="ChEBI" id="CHEBI:58017"/>
        <dbReference type="EC" id="2.4.2.9"/>
    </reaction>
</comment>
<comment type="cofactor">
    <cofactor evidence="1">
        <name>Mg(2+)</name>
        <dbReference type="ChEBI" id="CHEBI:18420"/>
    </cofactor>
    <text evidence="1">Binds 1 Mg(2+) ion per subunit. The magnesium is bound as Mg-PRPP.</text>
</comment>
<comment type="activity regulation">
    <text evidence="1">Allosterically activated by GTP.</text>
</comment>
<comment type="pathway">
    <text evidence="1">Pyrimidine metabolism; UMP biosynthesis via salvage pathway; UMP from uracil: step 1/1.</text>
</comment>
<comment type="similarity">
    <text evidence="1">Belongs to the UPRTase family.</text>
</comment>
<gene>
    <name evidence="1" type="primary">upp</name>
    <name type="ordered locus">BC_5315</name>
</gene>
<evidence type="ECO:0000255" key="1">
    <source>
        <dbReference type="HAMAP-Rule" id="MF_01218"/>
    </source>
</evidence>
<organism>
    <name type="scientific">Bacillus cereus (strain ATCC 14579 / DSM 31 / CCUG 7414 / JCM 2152 / NBRC 15305 / NCIMB 9373 / NCTC 2599 / NRRL B-3711)</name>
    <dbReference type="NCBI Taxonomy" id="226900"/>
    <lineage>
        <taxon>Bacteria</taxon>
        <taxon>Bacillati</taxon>
        <taxon>Bacillota</taxon>
        <taxon>Bacilli</taxon>
        <taxon>Bacillales</taxon>
        <taxon>Bacillaceae</taxon>
        <taxon>Bacillus</taxon>
        <taxon>Bacillus cereus group</taxon>
    </lineage>
</organism>
<feature type="chain" id="PRO_0000120796" description="Uracil phosphoribosyltransferase">
    <location>
        <begin position="1"/>
        <end position="209"/>
    </location>
</feature>
<feature type="binding site" evidence="1">
    <location>
        <position position="79"/>
    </location>
    <ligand>
        <name>5-phospho-alpha-D-ribose 1-diphosphate</name>
        <dbReference type="ChEBI" id="CHEBI:58017"/>
    </ligand>
</feature>
<feature type="binding site" evidence="1">
    <location>
        <position position="104"/>
    </location>
    <ligand>
        <name>5-phospho-alpha-D-ribose 1-diphosphate</name>
        <dbReference type="ChEBI" id="CHEBI:58017"/>
    </ligand>
</feature>
<feature type="binding site" evidence="1">
    <location>
        <begin position="131"/>
        <end position="139"/>
    </location>
    <ligand>
        <name>5-phospho-alpha-D-ribose 1-diphosphate</name>
        <dbReference type="ChEBI" id="CHEBI:58017"/>
    </ligand>
</feature>
<feature type="binding site" evidence="1">
    <location>
        <position position="194"/>
    </location>
    <ligand>
        <name>uracil</name>
        <dbReference type="ChEBI" id="CHEBI:17568"/>
    </ligand>
</feature>
<feature type="binding site" evidence="1">
    <location>
        <begin position="199"/>
        <end position="201"/>
    </location>
    <ligand>
        <name>uracil</name>
        <dbReference type="ChEBI" id="CHEBI:17568"/>
    </ligand>
</feature>
<feature type="binding site" evidence="1">
    <location>
        <position position="200"/>
    </location>
    <ligand>
        <name>5-phospho-alpha-D-ribose 1-diphosphate</name>
        <dbReference type="ChEBI" id="CHEBI:58017"/>
    </ligand>
</feature>
<name>UPP_BACCR</name>
<sequence>MGKLYVFDHPLIQHKITYIRDKNTGTKDFRELVDEVASLMAFEITRDLPLKDIEIETPVSKATTKVIAGKKLGLIPILRAGLGMVDGILKLIPAAKVGHVGLYRDPKTLQPVEYYVKLPTDVEERDFIVLDPMLATGGSAAEAINSLKKRGAKQIKLMCIVAAPEGVKVVQEEHPDVDIYVAALDEKLNDHGYVVPGLGDAGDRLFGTK</sequence>